<dbReference type="EMBL" id="AM286415">
    <property type="protein sequence ID" value="CAL11632.1"/>
    <property type="molecule type" value="Genomic_DNA"/>
</dbReference>
<dbReference type="RefSeq" id="WP_005170970.1">
    <property type="nucleotide sequence ID" value="NC_008800.1"/>
</dbReference>
<dbReference type="RefSeq" id="YP_001005848.1">
    <property type="nucleotide sequence ID" value="NC_008800.1"/>
</dbReference>
<dbReference type="SMR" id="A1JML8"/>
<dbReference type="KEGG" id="yen:YE1554"/>
<dbReference type="PATRIC" id="fig|393305.7.peg.1682"/>
<dbReference type="eggNOG" id="COG3006">
    <property type="taxonomic scope" value="Bacteria"/>
</dbReference>
<dbReference type="HOGENOM" id="CLU_049853_0_0_6"/>
<dbReference type="OrthoDB" id="6450805at2"/>
<dbReference type="Proteomes" id="UP000000642">
    <property type="component" value="Chromosome"/>
</dbReference>
<dbReference type="GO" id="GO:0005737">
    <property type="term" value="C:cytoplasm"/>
    <property type="evidence" value="ECO:0007669"/>
    <property type="project" value="UniProtKB-UniRule"/>
</dbReference>
<dbReference type="GO" id="GO:0009295">
    <property type="term" value="C:nucleoid"/>
    <property type="evidence" value="ECO:0007669"/>
    <property type="project" value="UniProtKB-SubCell"/>
</dbReference>
<dbReference type="GO" id="GO:0005509">
    <property type="term" value="F:calcium ion binding"/>
    <property type="evidence" value="ECO:0007669"/>
    <property type="project" value="UniProtKB-UniRule"/>
</dbReference>
<dbReference type="GO" id="GO:0051301">
    <property type="term" value="P:cell division"/>
    <property type="evidence" value="ECO:0007669"/>
    <property type="project" value="UniProtKB-KW"/>
</dbReference>
<dbReference type="GO" id="GO:0030261">
    <property type="term" value="P:chromosome condensation"/>
    <property type="evidence" value="ECO:0007669"/>
    <property type="project" value="UniProtKB-KW"/>
</dbReference>
<dbReference type="GO" id="GO:0007059">
    <property type="term" value="P:chromosome segregation"/>
    <property type="evidence" value="ECO:0007669"/>
    <property type="project" value="UniProtKB-UniRule"/>
</dbReference>
<dbReference type="GO" id="GO:0006260">
    <property type="term" value="P:DNA replication"/>
    <property type="evidence" value="ECO:0007669"/>
    <property type="project" value="UniProtKB-UniRule"/>
</dbReference>
<dbReference type="CDD" id="cd16337">
    <property type="entry name" value="MukF_C"/>
    <property type="match status" value="1"/>
</dbReference>
<dbReference type="CDD" id="cd16335">
    <property type="entry name" value="MukF_N"/>
    <property type="match status" value="1"/>
</dbReference>
<dbReference type="Gene3D" id="1.20.58.590">
    <property type="entry name" value="Chromosome partition protein MukF, middle domain"/>
    <property type="match status" value="1"/>
</dbReference>
<dbReference type="Gene3D" id="1.10.225.40">
    <property type="entry name" value="MukF, C-terminal domain"/>
    <property type="match status" value="1"/>
</dbReference>
<dbReference type="Gene3D" id="1.10.10.10">
    <property type="entry name" value="Winged helix-like DNA-binding domain superfamily/Winged helix DNA-binding domain"/>
    <property type="match status" value="1"/>
</dbReference>
<dbReference type="HAMAP" id="MF_01803">
    <property type="entry name" value="MukF"/>
    <property type="match status" value="1"/>
</dbReference>
<dbReference type="InterPro" id="IPR005582">
    <property type="entry name" value="Chromosome_partition_MukF"/>
</dbReference>
<dbReference type="InterPro" id="IPR033441">
    <property type="entry name" value="MukF_C"/>
</dbReference>
<dbReference type="InterPro" id="IPR038198">
    <property type="entry name" value="MukF_C_sf"/>
</dbReference>
<dbReference type="InterPro" id="IPR033440">
    <property type="entry name" value="MukF_M"/>
</dbReference>
<dbReference type="InterPro" id="IPR036141">
    <property type="entry name" value="MukF_M_sp"/>
</dbReference>
<dbReference type="InterPro" id="IPR033439">
    <property type="entry name" value="MukF_WHTH"/>
</dbReference>
<dbReference type="InterPro" id="IPR036388">
    <property type="entry name" value="WH-like_DNA-bd_sf"/>
</dbReference>
<dbReference type="InterPro" id="IPR036390">
    <property type="entry name" value="WH_DNA-bd_sf"/>
</dbReference>
<dbReference type="NCBIfam" id="NF003615">
    <property type="entry name" value="PRK05260.1"/>
    <property type="match status" value="1"/>
</dbReference>
<dbReference type="Pfam" id="PF03882">
    <property type="entry name" value="KicB"/>
    <property type="match status" value="1"/>
</dbReference>
<dbReference type="Pfam" id="PF17193">
    <property type="entry name" value="MukF_C"/>
    <property type="match status" value="1"/>
</dbReference>
<dbReference type="Pfam" id="PF17192">
    <property type="entry name" value="MukF_M"/>
    <property type="match status" value="1"/>
</dbReference>
<dbReference type="PIRSF" id="PIRSF018282">
    <property type="entry name" value="MukF"/>
    <property type="match status" value="1"/>
</dbReference>
<dbReference type="SUPFAM" id="SSF140570">
    <property type="entry name" value="MukF C-terminal domain-like"/>
    <property type="match status" value="1"/>
</dbReference>
<dbReference type="SUPFAM" id="SSF46785">
    <property type="entry name" value="Winged helix' DNA-binding domain"/>
    <property type="match status" value="1"/>
</dbReference>
<reference key="1">
    <citation type="journal article" date="2006" name="PLoS Genet.">
        <title>The complete genome sequence and comparative genome analysis of the high pathogenicity Yersinia enterocolitica strain 8081.</title>
        <authorList>
            <person name="Thomson N.R."/>
            <person name="Howard S."/>
            <person name="Wren B.W."/>
            <person name="Holden M.T.G."/>
            <person name="Crossman L."/>
            <person name="Challis G.L."/>
            <person name="Churcher C."/>
            <person name="Mungall K."/>
            <person name="Brooks K."/>
            <person name="Chillingworth T."/>
            <person name="Feltwell T."/>
            <person name="Abdellah Z."/>
            <person name="Hauser H."/>
            <person name="Jagels K."/>
            <person name="Maddison M."/>
            <person name="Moule S."/>
            <person name="Sanders M."/>
            <person name="Whitehead S."/>
            <person name="Quail M.A."/>
            <person name="Dougan G."/>
            <person name="Parkhill J."/>
            <person name="Prentice M.B."/>
        </authorList>
    </citation>
    <scope>NUCLEOTIDE SEQUENCE [LARGE SCALE GENOMIC DNA]</scope>
    <source>
        <strain>NCTC 13174 / 8081</strain>
    </source>
</reference>
<evidence type="ECO:0000255" key="1">
    <source>
        <dbReference type="HAMAP-Rule" id="MF_01803"/>
    </source>
</evidence>
<sequence>MSEFSQTVPELVAWARKNDFSITLPTERLAFLMAIATLNGERLDGEMSEGELVDAFRHVSKGFEQTTETVAVRANNAINDMVRQRLLNRFTSEMADGNAIYRLTPLGIGITDYYIRQREFSTLRLSMQLSIVAQELQRAAEAAEEGGDEFHWHRNVFAPLKYSVAEIFDSIDMTQRLMDEQQHSVKEDIAALLNQDWRAAIASCEMLLSETSGTLRELQDTLEAAGDKLQANLLRIQEATIGNAGLDLVDKLVFDLQSKLDRIISWGQQAIDLWIGYDRHVHKFIRTAIDMDKNRVFAQRLRQSVQNYFDNPWALTYANADRLLDMRDEELSLRSEEVTGELPPDLEFEEFNAIREQLAAMIEQALLVYQQQKLPLNLGEVMRDYLAQYPRARHFDVARILVDQAVRLGVAEADFSGLPAEWLAINDYGAKVQAHVINKY</sequence>
<comment type="function">
    <text evidence="1">Involved in chromosome condensation, segregation and cell cycle progression. May participate in facilitating chromosome segregation by condensation DNA from both sides of a centrally located replisome during cell division. Not required for mini-F plasmid partitioning. Probably acts via its interaction with MukB and MukE. Overexpression results in anucleate cells. It has a calcium binding activity.</text>
</comment>
<comment type="subunit">
    <text evidence="1">Interacts, and probably forms a ternary complex, with MukE and MukB via its C-terminal region. The complex formation is stimulated by calcium or magnesium. It is required for an interaction between MukE and MukB.</text>
</comment>
<comment type="subcellular location">
    <subcellularLocation>
        <location evidence="1">Cytoplasm</location>
        <location evidence="1">Nucleoid</location>
    </subcellularLocation>
    <text evidence="1">Restricted to the nucleoid region.</text>
</comment>
<comment type="similarity">
    <text evidence="1">Belongs to the MukF family.</text>
</comment>
<organism>
    <name type="scientific">Yersinia enterocolitica serotype O:8 / biotype 1B (strain NCTC 13174 / 8081)</name>
    <dbReference type="NCBI Taxonomy" id="393305"/>
    <lineage>
        <taxon>Bacteria</taxon>
        <taxon>Pseudomonadati</taxon>
        <taxon>Pseudomonadota</taxon>
        <taxon>Gammaproteobacteria</taxon>
        <taxon>Enterobacterales</taxon>
        <taxon>Yersiniaceae</taxon>
        <taxon>Yersinia</taxon>
    </lineage>
</organism>
<name>MUKF_YERE8</name>
<accession>A1JML8</accession>
<proteinExistence type="inferred from homology"/>
<gene>
    <name evidence="1" type="primary">mukF</name>
    <name type="ordered locus">YE1554</name>
</gene>
<keyword id="KW-0106">Calcium</keyword>
<keyword id="KW-0131">Cell cycle</keyword>
<keyword id="KW-0132">Cell division</keyword>
<keyword id="KW-0159">Chromosome partition</keyword>
<keyword id="KW-0963">Cytoplasm</keyword>
<keyword id="KW-0226">DNA condensation</keyword>
<protein>
    <recommendedName>
        <fullName evidence="1">Chromosome partition protein MukF</fullName>
    </recommendedName>
</protein>
<feature type="chain" id="PRO_1000069945" description="Chromosome partition protein MukF">
    <location>
        <begin position="1"/>
        <end position="440"/>
    </location>
</feature>
<feature type="region of interest" description="Leucine-zipper">
    <location>
        <begin position="208"/>
        <end position="236"/>
    </location>
</feature>